<keyword id="KW-0496">Mitochondrion</keyword>
<keyword id="KW-1185">Reference proteome</keyword>
<keyword id="KW-0687">Ribonucleoprotein</keyword>
<keyword id="KW-0689">Ribosomal protein</keyword>
<keyword id="KW-0809">Transit peptide</keyword>
<accession>Q6BMB3</accession>
<sequence length="267" mass="30669">MLSRILGVRNHSFRAFSTIGVCYNKSNTSPKKYLSPNEFASQKQVDEIEEQAYKQNLLNEEYKYDPKYLSENELNPISKRPIPLNVELLKYKPVQLPPTHGHEVAKIEFKGYDKDDLIRASEFAARAAFYLGIPCSKVQSLKTEKRLYTVIKSPFAQAKSKENFKRTTYGRKVYAYDATPEVVDLWLSFINKHAIEGVKYNALIHTRESLDFCEKLDALSADDMHMPDAYKGSDDPIANKVEELLKSDTFKKYFDEANIAESPKESK</sequence>
<reference key="1">
    <citation type="journal article" date="2004" name="Nature">
        <title>Genome evolution in yeasts.</title>
        <authorList>
            <person name="Dujon B."/>
            <person name="Sherman D."/>
            <person name="Fischer G."/>
            <person name="Durrens P."/>
            <person name="Casaregola S."/>
            <person name="Lafontaine I."/>
            <person name="de Montigny J."/>
            <person name="Marck C."/>
            <person name="Neuveglise C."/>
            <person name="Talla E."/>
            <person name="Goffard N."/>
            <person name="Frangeul L."/>
            <person name="Aigle M."/>
            <person name="Anthouard V."/>
            <person name="Babour A."/>
            <person name="Barbe V."/>
            <person name="Barnay S."/>
            <person name="Blanchin S."/>
            <person name="Beckerich J.-M."/>
            <person name="Beyne E."/>
            <person name="Bleykasten C."/>
            <person name="Boisrame A."/>
            <person name="Boyer J."/>
            <person name="Cattolico L."/>
            <person name="Confanioleri F."/>
            <person name="de Daruvar A."/>
            <person name="Despons L."/>
            <person name="Fabre E."/>
            <person name="Fairhead C."/>
            <person name="Ferry-Dumazet H."/>
            <person name="Groppi A."/>
            <person name="Hantraye F."/>
            <person name="Hennequin C."/>
            <person name="Jauniaux N."/>
            <person name="Joyet P."/>
            <person name="Kachouri R."/>
            <person name="Kerrest A."/>
            <person name="Koszul R."/>
            <person name="Lemaire M."/>
            <person name="Lesur I."/>
            <person name="Ma L."/>
            <person name="Muller H."/>
            <person name="Nicaud J.-M."/>
            <person name="Nikolski M."/>
            <person name="Oztas S."/>
            <person name="Ozier-Kalogeropoulos O."/>
            <person name="Pellenz S."/>
            <person name="Potier S."/>
            <person name="Richard G.-F."/>
            <person name="Straub M.-L."/>
            <person name="Suleau A."/>
            <person name="Swennen D."/>
            <person name="Tekaia F."/>
            <person name="Wesolowski-Louvel M."/>
            <person name="Westhof E."/>
            <person name="Wirth B."/>
            <person name="Zeniou-Meyer M."/>
            <person name="Zivanovic Y."/>
            <person name="Bolotin-Fukuhara M."/>
            <person name="Thierry A."/>
            <person name="Bouchier C."/>
            <person name="Caudron B."/>
            <person name="Scarpelli C."/>
            <person name="Gaillardin C."/>
            <person name="Weissenbach J."/>
            <person name="Wincker P."/>
            <person name="Souciet J.-L."/>
        </authorList>
    </citation>
    <scope>NUCLEOTIDE SEQUENCE [LARGE SCALE GENOMIC DNA]</scope>
    <source>
        <strain>ATCC 36239 / CBS 767 / BCRC 21394 / JCM 1990 / NBRC 0083 / IGC 2968</strain>
    </source>
</reference>
<protein>
    <recommendedName>
        <fullName evidence="3">Small ribosomal subunit protein uS10m</fullName>
    </recommendedName>
    <alternativeName>
        <fullName>37S ribosomal protein S10, mitochondrial</fullName>
    </alternativeName>
    <alternativeName>
        <fullName>Mitochondrial ribosomal small subunit protein 10</fullName>
    </alternativeName>
</protein>
<dbReference type="EMBL" id="CR382138">
    <property type="protein sequence ID" value="CAG88990.1"/>
    <property type="molecule type" value="Genomic_DNA"/>
</dbReference>
<dbReference type="RefSeq" id="XP_460658.1">
    <property type="nucleotide sequence ID" value="XM_460658.1"/>
</dbReference>
<dbReference type="SMR" id="Q6BMB3"/>
<dbReference type="FunCoup" id="Q6BMB3">
    <property type="interactions" value="313"/>
</dbReference>
<dbReference type="STRING" id="284592.Q6BMB3"/>
<dbReference type="GeneID" id="2904130"/>
<dbReference type="KEGG" id="dha:DEHA2F06864g"/>
<dbReference type="eggNOG" id="KOG3321">
    <property type="taxonomic scope" value="Eukaryota"/>
</dbReference>
<dbReference type="HOGENOM" id="CLU_051208_4_0_1"/>
<dbReference type="InParanoid" id="Q6BMB3"/>
<dbReference type="OMA" id="KVESWTL"/>
<dbReference type="OrthoDB" id="366214at2759"/>
<dbReference type="Proteomes" id="UP000000599">
    <property type="component" value="Chromosome F"/>
</dbReference>
<dbReference type="GO" id="GO:0005739">
    <property type="term" value="C:mitochondrion"/>
    <property type="evidence" value="ECO:0007669"/>
    <property type="project" value="UniProtKB-SubCell"/>
</dbReference>
<dbReference type="GO" id="GO:1990904">
    <property type="term" value="C:ribonucleoprotein complex"/>
    <property type="evidence" value="ECO:0007669"/>
    <property type="project" value="UniProtKB-KW"/>
</dbReference>
<dbReference type="GO" id="GO:0005840">
    <property type="term" value="C:ribosome"/>
    <property type="evidence" value="ECO:0007669"/>
    <property type="project" value="UniProtKB-KW"/>
</dbReference>
<dbReference type="GO" id="GO:0003735">
    <property type="term" value="F:structural constituent of ribosome"/>
    <property type="evidence" value="ECO:0007669"/>
    <property type="project" value="InterPro"/>
</dbReference>
<dbReference type="GO" id="GO:0006412">
    <property type="term" value="P:translation"/>
    <property type="evidence" value="ECO:0007669"/>
    <property type="project" value="InterPro"/>
</dbReference>
<dbReference type="Gene3D" id="3.30.70.600">
    <property type="entry name" value="Ribosomal protein S10 domain"/>
    <property type="match status" value="1"/>
</dbReference>
<dbReference type="InterPro" id="IPR001848">
    <property type="entry name" value="Ribosomal_uS10"/>
</dbReference>
<dbReference type="InterPro" id="IPR027486">
    <property type="entry name" value="Ribosomal_uS10_dom"/>
</dbReference>
<dbReference type="InterPro" id="IPR036838">
    <property type="entry name" value="Ribosomal_uS10_dom_sf"/>
</dbReference>
<dbReference type="PANTHER" id="PTHR11700">
    <property type="entry name" value="30S RIBOSOMAL PROTEIN S10 FAMILY MEMBER"/>
    <property type="match status" value="1"/>
</dbReference>
<dbReference type="Pfam" id="PF00338">
    <property type="entry name" value="Ribosomal_S10"/>
    <property type="match status" value="1"/>
</dbReference>
<dbReference type="SMART" id="SM01403">
    <property type="entry name" value="Ribosomal_S10"/>
    <property type="match status" value="1"/>
</dbReference>
<dbReference type="SUPFAM" id="SSF54999">
    <property type="entry name" value="Ribosomal protein S10"/>
    <property type="match status" value="1"/>
</dbReference>
<feature type="transit peptide" description="Mitochondrion" evidence="2">
    <location>
        <begin position="1"/>
        <end position="10"/>
    </location>
</feature>
<feature type="chain" id="PRO_0000043261" description="Small ribosomal subunit protein uS10m">
    <location>
        <begin position="11"/>
        <end position="267"/>
    </location>
</feature>
<name>RT10_DEBHA</name>
<organism>
    <name type="scientific">Debaryomyces hansenii (strain ATCC 36239 / CBS 767 / BCRC 21394 / JCM 1990 / NBRC 0083 / IGC 2968)</name>
    <name type="common">Yeast</name>
    <name type="synonym">Torulaspora hansenii</name>
    <dbReference type="NCBI Taxonomy" id="284592"/>
    <lineage>
        <taxon>Eukaryota</taxon>
        <taxon>Fungi</taxon>
        <taxon>Dikarya</taxon>
        <taxon>Ascomycota</taxon>
        <taxon>Saccharomycotina</taxon>
        <taxon>Pichiomycetes</taxon>
        <taxon>Debaryomycetaceae</taxon>
        <taxon>Debaryomyces</taxon>
    </lineage>
</organism>
<gene>
    <name type="primary">RSM10</name>
    <name type="ordered locus">DEHA2F06864g</name>
</gene>
<proteinExistence type="inferred from homology"/>
<evidence type="ECO:0000250" key="1"/>
<evidence type="ECO:0000255" key="2"/>
<evidence type="ECO:0000305" key="3"/>
<comment type="function">
    <text evidence="1">Involved in mitochondrial genome encoded proteins translation. Involved in the binding of tRNA to the ribosomes (By similarity).</text>
</comment>
<comment type="subunit">
    <text evidence="1">Part of the mitochondrial small ribosomal subunit.</text>
</comment>
<comment type="subcellular location">
    <subcellularLocation>
        <location evidence="1">Mitochondrion</location>
    </subcellularLocation>
</comment>
<comment type="similarity">
    <text evidence="3">Belongs to the universal ribosomal protein uS10 family.</text>
</comment>